<organism>
    <name type="scientific">Clostridium botulinum (strain Kyoto / Type A2)</name>
    <dbReference type="NCBI Taxonomy" id="536232"/>
    <lineage>
        <taxon>Bacteria</taxon>
        <taxon>Bacillati</taxon>
        <taxon>Bacillota</taxon>
        <taxon>Clostridia</taxon>
        <taxon>Eubacteriales</taxon>
        <taxon>Clostridiaceae</taxon>
        <taxon>Clostridium</taxon>
    </lineage>
</organism>
<accession>C1FUF9</accession>
<dbReference type="EC" id="2.4.1.227" evidence="1"/>
<dbReference type="EMBL" id="CP001581">
    <property type="protein sequence ID" value="ACO86765.1"/>
    <property type="molecule type" value="Genomic_DNA"/>
</dbReference>
<dbReference type="RefSeq" id="WP_012705502.1">
    <property type="nucleotide sequence ID" value="NC_012563.1"/>
</dbReference>
<dbReference type="SMR" id="C1FUF9"/>
<dbReference type="CAZy" id="GT28">
    <property type="family name" value="Glycosyltransferase Family 28"/>
</dbReference>
<dbReference type="KEGG" id="cby:CLM_3127"/>
<dbReference type="eggNOG" id="COG0707">
    <property type="taxonomic scope" value="Bacteria"/>
</dbReference>
<dbReference type="HOGENOM" id="CLU_037404_0_0_9"/>
<dbReference type="UniPathway" id="UPA00219"/>
<dbReference type="Proteomes" id="UP000001374">
    <property type="component" value="Chromosome"/>
</dbReference>
<dbReference type="GO" id="GO:0005886">
    <property type="term" value="C:plasma membrane"/>
    <property type="evidence" value="ECO:0007669"/>
    <property type="project" value="UniProtKB-SubCell"/>
</dbReference>
<dbReference type="GO" id="GO:0051991">
    <property type="term" value="F:UDP-N-acetyl-D-glucosamine:N-acetylmuramoyl-L-alanyl-D-glutamyl-meso-2,6-diaminopimelyl-D-alanyl-D-alanine-diphosphoundecaprenol 4-beta-N-acetylglucosaminlytransferase activity"/>
    <property type="evidence" value="ECO:0007669"/>
    <property type="project" value="RHEA"/>
</dbReference>
<dbReference type="GO" id="GO:0050511">
    <property type="term" value="F:undecaprenyldiphospho-muramoylpentapeptide beta-N-acetylglucosaminyltransferase activity"/>
    <property type="evidence" value="ECO:0007669"/>
    <property type="project" value="UniProtKB-UniRule"/>
</dbReference>
<dbReference type="GO" id="GO:0005975">
    <property type="term" value="P:carbohydrate metabolic process"/>
    <property type="evidence" value="ECO:0007669"/>
    <property type="project" value="InterPro"/>
</dbReference>
<dbReference type="GO" id="GO:0051301">
    <property type="term" value="P:cell division"/>
    <property type="evidence" value="ECO:0007669"/>
    <property type="project" value="UniProtKB-KW"/>
</dbReference>
<dbReference type="GO" id="GO:0071555">
    <property type="term" value="P:cell wall organization"/>
    <property type="evidence" value="ECO:0007669"/>
    <property type="project" value="UniProtKB-KW"/>
</dbReference>
<dbReference type="GO" id="GO:0030259">
    <property type="term" value="P:lipid glycosylation"/>
    <property type="evidence" value="ECO:0007669"/>
    <property type="project" value="UniProtKB-UniRule"/>
</dbReference>
<dbReference type="GO" id="GO:0009252">
    <property type="term" value="P:peptidoglycan biosynthetic process"/>
    <property type="evidence" value="ECO:0007669"/>
    <property type="project" value="UniProtKB-UniRule"/>
</dbReference>
<dbReference type="GO" id="GO:0008360">
    <property type="term" value="P:regulation of cell shape"/>
    <property type="evidence" value="ECO:0007669"/>
    <property type="project" value="UniProtKB-KW"/>
</dbReference>
<dbReference type="CDD" id="cd03785">
    <property type="entry name" value="GT28_MurG"/>
    <property type="match status" value="1"/>
</dbReference>
<dbReference type="Gene3D" id="3.40.50.2000">
    <property type="entry name" value="Glycogen Phosphorylase B"/>
    <property type="match status" value="2"/>
</dbReference>
<dbReference type="HAMAP" id="MF_00033">
    <property type="entry name" value="MurG"/>
    <property type="match status" value="1"/>
</dbReference>
<dbReference type="InterPro" id="IPR006009">
    <property type="entry name" value="GlcNAc_MurG"/>
</dbReference>
<dbReference type="InterPro" id="IPR007235">
    <property type="entry name" value="Glyco_trans_28_C"/>
</dbReference>
<dbReference type="InterPro" id="IPR004276">
    <property type="entry name" value="GlycoTrans_28_N"/>
</dbReference>
<dbReference type="NCBIfam" id="TIGR01133">
    <property type="entry name" value="murG"/>
    <property type="match status" value="1"/>
</dbReference>
<dbReference type="NCBIfam" id="NF009102">
    <property type="entry name" value="PRK12446.1"/>
    <property type="match status" value="1"/>
</dbReference>
<dbReference type="PANTHER" id="PTHR21015:SF27">
    <property type="entry name" value="UDP-N-ACETYLGLUCOSAMINE--N-ACETYLMURAMYL-(PENTAPEPTIDE) PYROPHOSPHORYL-UNDECAPRENOL N-ACETYLGLUCOSAMINE TRANSFERASE"/>
    <property type="match status" value="1"/>
</dbReference>
<dbReference type="PANTHER" id="PTHR21015">
    <property type="entry name" value="UDP-N-ACETYLGLUCOSAMINE--N-ACETYLMURAMYL-(PENTAPEPTIDE) PYROPHOSPHORYL-UNDECAPRENOL N-ACETYLGLUCOSAMINE TRANSFERASE 1"/>
    <property type="match status" value="1"/>
</dbReference>
<dbReference type="Pfam" id="PF04101">
    <property type="entry name" value="Glyco_tran_28_C"/>
    <property type="match status" value="1"/>
</dbReference>
<dbReference type="Pfam" id="PF03033">
    <property type="entry name" value="Glyco_transf_28"/>
    <property type="match status" value="1"/>
</dbReference>
<dbReference type="SUPFAM" id="SSF53756">
    <property type="entry name" value="UDP-Glycosyltransferase/glycogen phosphorylase"/>
    <property type="match status" value="1"/>
</dbReference>
<feature type="chain" id="PRO_1000192123" description="UDP-N-acetylglucosamine--N-acetylmuramyl-(pentapeptide) pyrophosphoryl-undecaprenol N-acetylglucosamine transferase">
    <location>
        <begin position="1"/>
        <end position="354"/>
    </location>
</feature>
<feature type="binding site" evidence="1">
    <location>
        <begin position="11"/>
        <end position="13"/>
    </location>
    <ligand>
        <name>UDP-N-acetyl-alpha-D-glucosamine</name>
        <dbReference type="ChEBI" id="CHEBI:57705"/>
    </ligand>
</feature>
<feature type="binding site" evidence="1">
    <location>
        <position position="164"/>
    </location>
    <ligand>
        <name>UDP-N-acetyl-alpha-D-glucosamine</name>
        <dbReference type="ChEBI" id="CHEBI:57705"/>
    </ligand>
</feature>
<feature type="binding site" evidence="1">
    <location>
        <position position="194"/>
    </location>
    <ligand>
        <name>UDP-N-acetyl-alpha-D-glucosamine</name>
        <dbReference type="ChEBI" id="CHEBI:57705"/>
    </ligand>
</feature>
<feature type="binding site" evidence="1">
    <location>
        <position position="289"/>
    </location>
    <ligand>
        <name>UDP-N-acetyl-alpha-D-glucosamine</name>
        <dbReference type="ChEBI" id="CHEBI:57705"/>
    </ligand>
</feature>
<sequence>MKKIIMTGGGTAGHVTPNLALVPELKKLGYEIKYIGSIEGIERKIIEKEGIEYFPISSGKLRRYFDLKNFSDPFKVLKGVFQAKKIIKREKPDIVFSKGGFVTVPVVIAAHLNKIPVIAHESDITPGLANKLATPYCTRVCVTFPESVKHIKGDKAVLTGTPIRRELLEGNKLEGIKLCGFKDNKPILLIIGGSLGSKIINEIVRKNLDNILSKFNIIHICGKSNLDENLENRKGYAQFEYVNEELPDLMKASDLVISRAGANVIYELLALKKPNLLIPLSKKSSRGDQILNAASFEKSGYSLVLKEEELEDKNLMKKLNYLYENRNVYINNMSKSKMDNGVKNITELIKKYTK</sequence>
<gene>
    <name evidence="1" type="primary">murG</name>
    <name type="ordered locus">CLM_3127</name>
</gene>
<keyword id="KW-0131">Cell cycle</keyword>
<keyword id="KW-0132">Cell division</keyword>
<keyword id="KW-1003">Cell membrane</keyword>
<keyword id="KW-0133">Cell shape</keyword>
<keyword id="KW-0961">Cell wall biogenesis/degradation</keyword>
<keyword id="KW-0328">Glycosyltransferase</keyword>
<keyword id="KW-0472">Membrane</keyword>
<keyword id="KW-0573">Peptidoglycan synthesis</keyword>
<keyword id="KW-0808">Transferase</keyword>
<evidence type="ECO:0000255" key="1">
    <source>
        <dbReference type="HAMAP-Rule" id="MF_00033"/>
    </source>
</evidence>
<comment type="function">
    <text evidence="1">Cell wall formation. Catalyzes the transfer of a GlcNAc subunit on undecaprenyl-pyrophosphoryl-MurNAc-pentapeptide (lipid intermediate I) to form undecaprenyl-pyrophosphoryl-MurNAc-(pentapeptide)GlcNAc (lipid intermediate II).</text>
</comment>
<comment type="catalytic activity">
    <reaction evidence="1">
        <text>di-trans,octa-cis-undecaprenyl diphospho-N-acetyl-alpha-D-muramoyl-L-alanyl-D-glutamyl-meso-2,6-diaminopimeloyl-D-alanyl-D-alanine + UDP-N-acetyl-alpha-D-glucosamine = di-trans,octa-cis-undecaprenyl diphospho-[N-acetyl-alpha-D-glucosaminyl-(1-&gt;4)]-N-acetyl-alpha-D-muramoyl-L-alanyl-D-glutamyl-meso-2,6-diaminopimeloyl-D-alanyl-D-alanine + UDP + H(+)</text>
        <dbReference type="Rhea" id="RHEA:31227"/>
        <dbReference type="ChEBI" id="CHEBI:15378"/>
        <dbReference type="ChEBI" id="CHEBI:57705"/>
        <dbReference type="ChEBI" id="CHEBI:58223"/>
        <dbReference type="ChEBI" id="CHEBI:61387"/>
        <dbReference type="ChEBI" id="CHEBI:61388"/>
        <dbReference type="EC" id="2.4.1.227"/>
    </reaction>
</comment>
<comment type="pathway">
    <text evidence="1">Cell wall biogenesis; peptidoglycan biosynthesis.</text>
</comment>
<comment type="subcellular location">
    <subcellularLocation>
        <location evidence="1">Cell membrane</location>
        <topology evidence="1">Peripheral membrane protein</topology>
        <orientation evidence="1">Cytoplasmic side</orientation>
    </subcellularLocation>
</comment>
<comment type="similarity">
    <text evidence="1">Belongs to the glycosyltransferase 28 family. MurG subfamily.</text>
</comment>
<reference key="1">
    <citation type="submission" date="2008-10" db="EMBL/GenBank/DDBJ databases">
        <title>Genome sequence of Clostridium botulinum A2 Kyoto.</title>
        <authorList>
            <person name="Shrivastava S."/>
            <person name="Brinkac L.M."/>
            <person name="Brown J.L."/>
            <person name="Bruce D."/>
            <person name="Detter C.C."/>
            <person name="Johnson E.A."/>
            <person name="Munk C.A."/>
            <person name="Smith L.A."/>
            <person name="Smith T.J."/>
            <person name="Sutton G."/>
            <person name="Brettin T.S."/>
        </authorList>
    </citation>
    <scope>NUCLEOTIDE SEQUENCE [LARGE SCALE GENOMIC DNA]</scope>
    <source>
        <strain>Kyoto / Type A2</strain>
    </source>
</reference>
<proteinExistence type="inferred from homology"/>
<name>MURG_CLOBJ</name>
<protein>
    <recommendedName>
        <fullName evidence="1">UDP-N-acetylglucosamine--N-acetylmuramyl-(pentapeptide) pyrophosphoryl-undecaprenol N-acetylglucosamine transferase</fullName>
        <ecNumber evidence="1">2.4.1.227</ecNumber>
    </recommendedName>
    <alternativeName>
        <fullName evidence="1">Undecaprenyl-PP-MurNAc-pentapeptide-UDPGlcNAc GlcNAc transferase</fullName>
    </alternativeName>
</protein>